<dbReference type="EC" id="3.4.21.-"/>
<dbReference type="EMBL" id="AY225505">
    <property type="protein sequence ID" value="AAO67553.1"/>
    <property type="molecule type" value="mRNA"/>
</dbReference>
<dbReference type="SMR" id="Q802F0"/>
<dbReference type="MEROPS" id="S01.188"/>
<dbReference type="GO" id="GO:0005576">
    <property type="term" value="C:extracellular region"/>
    <property type="evidence" value="ECO:0007669"/>
    <property type="project" value="UniProtKB-SubCell"/>
</dbReference>
<dbReference type="GO" id="GO:0030141">
    <property type="term" value="C:secretory granule"/>
    <property type="evidence" value="ECO:0007669"/>
    <property type="project" value="TreeGrafter"/>
</dbReference>
<dbReference type="GO" id="GO:0004252">
    <property type="term" value="F:serine-type endopeptidase activity"/>
    <property type="evidence" value="ECO:0007669"/>
    <property type="project" value="InterPro"/>
</dbReference>
<dbReference type="GO" id="GO:0090729">
    <property type="term" value="F:toxin activity"/>
    <property type="evidence" value="ECO:0007669"/>
    <property type="project" value="UniProtKB-KW"/>
</dbReference>
<dbReference type="GO" id="GO:0006508">
    <property type="term" value="P:proteolysis"/>
    <property type="evidence" value="ECO:0007669"/>
    <property type="project" value="UniProtKB-KW"/>
</dbReference>
<dbReference type="CDD" id="cd00190">
    <property type="entry name" value="Tryp_SPc"/>
    <property type="match status" value="1"/>
</dbReference>
<dbReference type="FunFam" id="2.40.10.10:FF:000010">
    <property type="entry name" value="Kallikrein related peptidase 11"/>
    <property type="match status" value="1"/>
</dbReference>
<dbReference type="Gene3D" id="2.40.10.10">
    <property type="entry name" value="Trypsin-like serine proteases"/>
    <property type="match status" value="2"/>
</dbReference>
<dbReference type="InterPro" id="IPR009003">
    <property type="entry name" value="Peptidase_S1_PA"/>
</dbReference>
<dbReference type="InterPro" id="IPR043504">
    <property type="entry name" value="Peptidase_S1_PA_chymotrypsin"/>
</dbReference>
<dbReference type="InterPro" id="IPR001314">
    <property type="entry name" value="Peptidase_S1A"/>
</dbReference>
<dbReference type="InterPro" id="IPR001254">
    <property type="entry name" value="Trypsin_dom"/>
</dbReference>
<dbReference type="InterPro" id="IPR018114">
    <property type="entry name" value="TRYPSIN_HIS"/>
</dbReference>
<dbReference type="InterPro" id="IPR033116">
    <property type="entry name" value="TRYPSIN_SER"/>
</dbReference>
<dbReference type="PANTHER" id="PTHR24271:SF47">
    <property type="entry name" value="KALLIKREIN-1"/>
    <property type="match status" value="1"/>
</dbReference>
<dbReference type="PANTHER" id="PTHR24271">
    <property type="entry name" value="KALLIKREIN-RELATED"/>
    <property type="match status" value="1"/>
</dbReference>
<dbReference type="Pfam" id="PF00089">
    <property type="entry name" value="Trypsin"/>
    <property type="match status" value="1"/>
</dbReference>
<dbReference type="PRINTS" id="PR00722">
    <property type="entry name" value="CHYMOTRYPSIN"/>
</dbReference>
<dbReference type="SMART" id="SM00020">
    <property type="entry name" value="Tryp_SPc"/>
    <property type="match status" value="1"/>
</dbReference>
<dbReference type="SUPFAM" id="SSF50494">
    <property type="entry name" value="Trypsin-like serine proteases"/>
    <property type="match status" value="1"/>
</dbReference>
<dbReference type="PROSITE" id="PS50240">
    <property type="entry name" value="TRYPSIN_DOM"/>
    <property type="match status" value="1"/>
</dbReference>
<dbReference type="PROSITE" id="PS00134">
    <property type="entry name" value="TRYPSIN_HIS"/>
    <property type="match status" value="1"/>
</dbReference>
<dbReference type="PROSITE" id="PS00135">
    <property type="entry name" value="TRYPSIN_SER"/>
    <property type="match status" value="1"/>
</dbReference>
<name>VSPP1_GLOHA</name>
<protein>
    <recommendedName>
        <fullName>Snake venom serine protease PTLE1</fullName>
        <shortName>SVSP</shortName>
        <ecNumber>3.4.21.-</ecNumber>
    </recommendedName>
</protein>
<sequence>MVLIRVLANLLILQLSYAQKSSELVIGGDECNINEHRFLALVFNSSGFLCSGTLINQEWVLTAAHCDMENMRIYLGVHNESVQYDDEQTRVPEEKFFCLRSNNDTKWDKDIMLIRLDSPVNNSAHIAPLNLPFNPPMLGSVCRIMGWGAITSPNEIYPDVPHCANINLLHYSMCQAVYPGMPAQSRILCAGIQTGGIDTCSGDSGGPLICNGQFQGILHAGGNPCALPRAPGLYTRVFDYTDWIENIIAGNTDASCPP</sequence>
<keyword id="KW-1015">Disulfide bond</keyword>
<keyword id="KW-0325">Glycoprotein</keyword>
<keyword id="KW-1199">Hemostasis impairing toxin</keyword>
<keyword id="KW-0378">Hydrolase</keyword>
<keyword id="KW-0645">Protease</keyword>
<keyword id="KW-0964">Secreted</keyword>
<keyword id="KW-0720">Serine protease</keyword>
<keyword id="KW-0732">Signal</keyword>
<keyword id="KW-0800">Toxin</keyword>
<keyword id="KW-0865">Zymogen</keyword>
<organism>
    <name type="scientific">Gloydius halys</name>
    <name type="common">Chinese water mocassin</name>
    <name type="synonym">Agkistrodon halys</name>
    <dbReference type="NCBI Taxonomy" id="8714"/>
    <lineage>
        <taxon>Eukaryota</taxon>
        <taxon>Metazoa</taxon>
        <taxon>Chordata</taxon>
        <taxon>Craniata</taxon>
        <taxon>Vertebrata</taxon>
        <taxon>Euteleostomi</taxon>
        <taxon>Lepidosauria</taxon>
        <taxon>Squamata</taxon>
        <taxon>Bifurcata</taxon>
        <taxon>Unidentata</taxon>
        <taxon>Episquamata</taxon>
        <taxon>Toxicofera</taxon>
        <taxon>Serpentes</taxon>
        <taxon>Colubroidea</taxon>
        <taxon>Viperidae</taxon>
        <taxon>Crotalinae</taxon>
        <taxon>Gloydius</taxon>
    </lineage>
</organism>
<comment type="function">
    <text evidence="1">Snake venom serine protease that may act in the hemostasis system of the prey.</text>
</comment>
<comment type="subunit">
    <text evidence="1">Monomer.</text>
</comment>
<comment type="subcellular location">
    <subcellularLocation>
        <location evidence="1">Secreted</location>
    </subcellularLocation>
</comment>
<comment type="tissue specificity">
    <text>Expressed by the venom gland.</text>
</comment>
<comment type="similarity">
    <text evidence="3">Belongs to the peptidase S1 family. Snake venom subfamily.</text>
</comment>
<accession>Q802F0</accession>
<proteinExistence type="evidence at transcript level"/>
<evidence type="ECO:0000250" key="1"/>
<evidence type="ECO:0000255" key="2"/>
<evidence type="ECO:0000255" key="3">
    <source>
        <dbReference type="PROSITE-ProRule" id="PRU00274"/>
    </source>
</evidence>
<reference key="1">
    <citation type="submission" date="2003-01" db="EMBL/GenBank/DDBJ databases">
        <title>Cloning and sequence analysis of the new cDNA of thrombin-like enzyme from Agkistrodon halys pallas.</title>
        <authorList>
            <person name="Liu T.T."/>
            <person name="Liang N.S."/>
            <person name="He H.P."/>
            <person name="Li Y."/>
            <person name="Xie Y.A."/>
            <person name="Meng Z.Q."/>
            <person name="Liang A.M."/>
        </authorList>
    </citation>
    <scope>NUCLEOTIDE SEQUENCE [MRNA]</scope>
    <source>
        <tissue>Venom gland</tissue>
    </source>
</reference>
<feature type="signal peptide" evidence="1">
    <location>
        <begin position="1"/>
        <end position="18"/>
    </location>
</feature>
<feature type="propeptide" id="PRO_0000296194" evidence="1">
    <location>
        <begin position="19"/>
        <end position="24"/>
    </location>
</feature>
<feature type="chain" id="PRO_0000296195" description="Snake venom serine protease PTLE1">
    <location>
        <begin position="25"/>
        <end position="258"/>
    </location>
</feature>
<feature type="domain" description="Peptidase S1" evidence="3">
    <location>
        <begin position="25"/>
        <end position="249"/>
    </location>
</feature>
<feature type="active site" description="Charge relay system" evidence="1">
    <location>
        <position position="65"/>
    </location>
</feature>
<feature type="active site" description="Charge relay system" evidence="1">
    <location>
        <position position="110"/>
    </location>
</feature>
<feature type="active site" description="Charge relay system" evidence="1">
    <location>
        <position position="204"/>
    </location>
</feature>
<feature type="glycosylation site" description="N-linked (GlcNAc...) asparagine" evidence="2">
    <location>
        <position position="44"/>
    </location>
</feature>
<feature type="glycosylation site" description="N-linked (GlcNAc...) asparagine" evidence="2">
    <location>
        <position position="79"/>
    </location>
</feature>
<feature type="glycosylation site" description="N-linked (GlcNAc...) asparagine" evidence="2">
    <location>
        <position position="103"/>
    </location>
</feature>
<feature type="glycosylation site" description="N-linked (GlcNAc...) asparagine" evidence="2">
    <location>
        <position position="121"/>
    </location>
</feature>
<feature type="disulfide bond" evidence="3">
    <location>
        <begin position="31"/>
        <end position="163"/>
    </location>
</feature>
<feature type="disulfide bond" evidence="3">
    <location>
        <begin position="50"/>
        <end position="66"/>
    </location>
</feature>
<feature type="disulfide bond" evidence="3">
    <location>
        <begin position="98"/>
        <end position="256"/>
    </location>
</feature>
<feature type="disulfide bond" evidence="3">
    <location>
        <begin position="142"/>
        <end position="210"/>
    </location>
</feature>
<feature type="disulfide bond" evidence="3">
    <location>
        <begin position="174"/>
        <end position="189"/>
    </location>
</feature>
<feature type="disulfide bond" evidence="3">
    <location>
        <begin position="200"/>
        <end position="225"/>
    </location>
</feature>